<feature type="chain" id="PRO_1000147471" description="Putative pre-16S rRNA nuclease">
    <location>
        <begin position="1"/>
        <end position="153"/>
    </location>
</feature>
<gene>
    <name type="ordered locus">Chy400_4158</name>
</gene>
<keyword id="KW-0963">Cytoplasm</keyword>
<keyword id="KW-0378">Hydrolase</keyword>
<keyword id="KW-0540">Nuclease</keyword>
<keyword id="KW-0690">Ribosome biogenesis</keyword>
<accession>B9LH40</accession>
<organism>
    <name type="scientific">Chloroflexus aurantiacus (strain ATCC 29364 / DSM 637 / Y-400-fl)</name>
    <dbReference type="NCBI Taxonomy" id="480224"/>
    <lineage>
        <taxon>Bacteria</taxon>
        <taxon>Bacillati</taxon>
        <taxon>Chloroflexota</taxon>
        <taxon>Chloroflexia</taxon>
        <taxon>Chloroflexales</taxon>
        <taxon>Chloroflexineae</taxon>
        <taxon>Chloroflexaceae</taxon>
        <taxon>Chloroflexus</taxon>
    </lineage>
</organism>
<proteinExistence type="inferred from homology"/>
<dbReference type="EC" id="3.1.-.-" evidence="1"/>
<dbReference type="EMBL" id="CP001364">
    <property type="protein sequence ID" value="ACM55513.1"/>
    <property type="molecule type" value="Genomic_DNA"/>
</dbReference>
<dbReference type="SMR" id="B9LH40"/>
<dbReference type="KEGG" id="chl:Chy400_4158"/>
<dbReference type="HOGENOM" id="CLU_098240_2_0_0"/>
<dbReference type="OrthoDB" id="9796140at2"/>
<dbReference type="GO" id="GO:0005829">
    <property type="term" value="C:cytosol"/>
    <property type="evidence" value="ECO:0007669"/>
    <property type="project" value="TreeGrafter"/>
</dbReference>
<dbReference type="GO" id="GO:0004518">
    <property type="term" value="F:nuclease activity"/>
    <property type="evidence" value="ECO:0007669"/>
    <property type="project" value="UniProtKB-KW"/>
</dbReference>
<dbReference type="GO" id="GO:0000967">
    <property type="term" value="P:rRNA 5'-end processing"/>
    <property type="evidence" value="ECO:0007669"/>
    <property type="project" value="UniProtKB-UniRule"/>
</dbReference>
<dbReference type="CDD" id="cd16964">
    <property type="entry name" value="YqgF"/>
    <property type="match status" value="1"/>
</dbReference>
<dbReference type="FunFam" id="3.30.420.140:FF:000005">
    <property type="entry name" value="Putative pre-16S rRNA nuclease"/>
    <property type="match status" value="1"/>
</dbReference>
<dbReference type="Gene3D" id="3.30.420.140">
    <property type="entry name" value="YqgF/RNase H-like domain"/>
    <property type="match status" value="1"/>
</dbReference>
<dbReference type="HAMAP" id="MF_00651">
    <property type="entry name" value="Nuclease_YqgF"/>
    <property type="match status" value="1"/>
</dbReference>
<dbReference type="InterPro" id="IPR012337">
    <property type="entry name" value="RNaseH-like_sf"/>
</dbReference>
<dbReference type="InterPro" id="IPR005227">
    <property type="entry name" value="YqgF"/>
</dbReference>
<dbReference type="InterPro" id="IPR006641">
    <property type="entry name" value="YqgF/RNaseH-like_dom"/>
</dbReference>
<dbReference type="InterPro" id="IPR037027">
    <property type="entry name" value="YqgF/RNaseH-like_dom_sf"/>
</dbReference>
<dbReference type="NCBIfam" id="TIGR00250">
    <property type="entry name" value="RNAse_H_YqgF"/>
    <property type="match status" value="1"/>
</dbReference>
<dbReference type="PANTHER" id="PTHR33317">
    <property type="entry name" value="POLYNUCLEOTIDYL TRANSFERASE, RIBONUCLEASE H-LIKE SUPERFAMILY PROTEIN"/>
    <property type="match status" value="1"/>
</dbReference>
<dbReference type="PANTHER" id="PTHR33317:SF4">
    <property type="entry name" value="POLYNUCLEOTIDYL TRANSFERASE, RIBONUCLEASE H-LIKE SUPERFAMILY PROTEIN"/>
    <property type="match status" value="1"/>
</dbReference>
<dbReference type="Pfam" id="PF03652">
    <property type="entry name" value="RuvX"/>
    <property type="match status" value="1"/>
</dbReference>
<dbReference type="SMART" id="SM00732">
    <property type="entry name" value="YqgFc"/>
    <property type="match status" value="1"/>
</dbReference>
<dbReference type="SUPFAM" id="SSF53098">
    <property type="entry name" value="Ribonuclease H-like"/>
    <property type="match status" value="1"/>
</dbReference>
<name>YQGF_CHLSY</name>
<reference key="1">
    <citation type="submission" date="2009-01" db="EMBL/GenBank/DDBJ databases">
        <title>Complete sequence of Chloroflexus sp. Y-400-fl.</title>
        <authorList>
            <consortium name="US DOE Joint Genome Institute"/>
            <person name="Lucas S."/>
            <person name="Copeland A."/>
            <person name="Lapidus A."/>
            <person name="Glavina del Rio T."/>
            <person name="Dalin E."/>
            <person name="Tice H."/>
            <person name="Bruce D."/>
            <person name="Goodwin L."/>
            <person name="Pitluck S."/>
            <person name="Sims D."/>
            <person name="Kiss H."/>
            <person name="Brettin T."/>
            <person name="Detter J.C."/>
            <person name="Han C."/>
            <person name="Larimer F."/>
            <person name="Land M."/>
            <person name="Hauser L."/>
            <person name="Kyrpides N."/>
            <person name="Ovchinnikova G."/>
            <person name="Bryant D.A."/>
            <person name="Richardson P."/>
        </authorList>
    </citation>
    <scope>NUCLEOTIDE SEQUENCE [LARGE SCALE GENOMIC DNA]</scope>
    <source>
        <strain>ATCC 29364 / DSM 637 / Y-400-fl</strain>
    </source>
</reference>
<protein>
    <recommendedName>
        <fullName evidence="1">Putative pre-16S rRNA nuclease</fullName>
        <ecNumber evidence="1">3.1.-.-</ecNumber>
    </recommendedName>
</protein>
<evidence type="ECO:0000255" key="1">
    <source>
        <dbReference type="HAMAP-Rule" id="MF_00651"/>
    </source>
</evidence>
<sequence>MNDQIILALDVGERRIGVAISDADARIAAPLTTINAHPPERAIAQIVRLVQERGVSRVVVGLPLTMRGERGPQAEVVQRFADTLSSALSCPVEMFDERLTSVAAEQMLRNLGLKPAKIKAQIDQVAASIILQDYLDARRSNPNRSHELPHSSD</sequence>
<comment type="function">
    <text evidence="1">Could be a nuclease involved in processing of the 5'-end of pre-16S rRNA.</text>
</comment>
<comment type="subcellular location">
    <subcellularLocation>
        <location evidence="1">Cytoplasm</location>
    </subcellularLocation>
</comment>
<comment type="similarity">
    <text evidence="1">Belongs to the YqgF nuclease family.</text>
</comment>